<dbReference type="EC" id="3.1.1.-" evidence="1 2"/>
<dbReference type="EMBL" id="AL123456">
    <property type="protein sequence ID" value="CCP43827.1"/>
    <property type="molecule type" value="Genomic_DNA"/>
</dbReference>
<dbReference type="RefSeq" id="NP_215592.1">
    <property type="nucleotide sequence ID" value="NC_000962.3"/>
</dbReference>
<dbReference type="RefSeq" id="WP_003900268.1">
    <property type="nucleotide sequence ID" value="NC_000962.3"/>
</dbReference>
<dbReference type="SMR" id="O53424"/>
<dbReference type="STRING" id="83332.Rv1076"/>
<dbReference type="SwissLipids" id="SLP:000001358"/>
<dbReference type="ESTHER" id="myctu-Rv1076">
    <property type="family name" value="Hormone-sensitive_lipase_like"/>
</dbReference>
<dbReference type="PaxDb" id="83332-Rv1076"/>
<dbReference type="DNASU" id="887112"/>
<dbReference type="GeneID" id="887112"/>
<dbReference type="KEGG" id="mtu:Rv1076"/>
<dbReference type="KEGG" id="mtv:RVBD_1076"/>
<dbReference type="PATRIC" id="fig|83332.111.peg.1198"/>
<dbReference type="TubercuList" id="Rv1076"/>
<dbReference type="eggNOG" id="COG0657">
    <property type="taxonomic scope" value="Bacteria"/>
</dbReference>
<dbReference type="InParanoid" id="O53424"/>
<dbReference type="OrthoDB" id="128186at2"/>
<dbReference type="PhylomeDB" id="O53424"/>
<dbReference type="Proteomes" id="UP000001584">
    <property type="component" value="Chromosome"/>
</dbReference>
<dbReference type="GO" id="GO:0005576">
    <property type="term" value="C:extracellular region"/>
    <property type="evidence" value="ECO:0007669"/>
    <property type="project" value="UniProtKB-SubCell"/>
</dbReference>
<dbReference type="GO" id="GO:0008126">
    <property type="term" value="F:acetylesterase activity"/>
    <property type="evidence" value="ECO:0007669"/>
    <property type="project" value="RHEA"/>
</dbReference>
<dbReference type="GO" id="GO:0004806">
    <property type="term" value="F:triacylglycerol lipase activity"/>
    <property type="evidence" value="ECO:0000318"/>
    <property type="project" value="GO_Central"/>
</dbReference>
<dbReference type="FunFam" id="3.40.50.1820:FF:000278">
    <property type="entry name" value="Esterase LipF"/>
    <property type="match status" value="1"/>
</dbReference>
<dbReference type="Gene3D" id="3.40.50.1820">
    <property type="entry name" value="alpha/beta hydrolase"/>
    <property type="match status" value="1"/>
</dbReference>
<dbReference type="InterPro" id="IPR013094">
    <property type="entry name" value="AB_hydrolase_3"/>
</dbReference>
<dbReference type="InterPro" id="IPR029058">
    <property type="entry name" value="AB_hydrolase_fold"/>
</dbReference>
<dbReference type="InterPro" id="IPR050300">
    <property type="entry name" value="GDXG_lipolytic_enzyme"/>
</dbReference>
<dbReference type="InterPro" id="IPR033140">
    <property type="entry name" value="Lipase_GDXG_put_SER_AS"/>
</dbReference>
<dbReference type="PANTHER" id="PTHR48081">
    <property type="entry name" value="AB HYDROLASE SUPERFAMILY PROTEIN C4A8.06C"/>
    <property type="match status" value="1"/>
</dbReference>
<dbReference type="PANTHER" id="PTHR48081:SF30">
    <property type="entry name" value="ACETYL-HYDROLASE LIPR-RELATED"/>
    <property type="match status" value="1"/>
</dbReference>
<dbReference type="Pfam" id="PF07859">
    <property type="entry name" value="Abhydrolase_3"/>
    <property type="match status" value="1"/>
</dbReference>
<dbReference type="SUPFAM" id="SSF53474">
    <property type="entry name" value="alpha/beta-Hydrolases"/>
    <property type="match status" value="1"/>
</dbReference>
<dbReference type="PROSITE" id="PS01174">
    <property type="entry name" value="LIPASE_GDXG_SER"/>
    <property type="match status" value="1"/>
</dbReference>
<keyword id="KW-0378">Hydrolase</keyword>
<keyword id="KW-1185">Reference proteome</keyword>
<keyword id="KW-0964">Secreted</keyword>
<organism>
    <name type="scientific">Mycobacterium tuberculosis (strain ATCC 25618 / H37Rv)</name>
    <dbReference type="NCBI Taxonomy" id="83332"/>
    <lineage>
        <taxon>Bacteria</taxon>
        <taxon>Bacillati</taxon>
        <taxon>Actinomycetota</taxon>
        <taxon>Actinomycetes</taxon>
        <taxon>Mycobacteriales</taxon>
        <taxon>Mycobacteriaceae</taxon>
        <taxon>Mycobacterium</taxon>
        <taxon>Mycobacterium tuberculosis complex</taxon>
    </lineage>
</organism>
<protein>
    <recommendedName>
        <fullName evidence="5">Esterase LipU</fullName>
        <ecNumber evidence="1 2">3.1.1.-</ecNumber>
    </recommendedName>
</protein>
<comment type="function">
    <text evidence="1 2 3">Esterase that shows preference for short chain fatty acids (PubMed:26398213, PubMed:28164792, PubMed:28327423). Contributes to the growth of M.tuberculosis during the nutritive stress (PubMed:28164792). Elicits strong humoral response in both extrapulmonary and relapsed cases of tuberculosis patients (PubMed:28327423).</text>
</comment>
<comment type="catalytic activity">
    <reaction evidence="1 2 3">
        <text>a fatty acid ester + H2O = an aliphatic alcohol + a fatty acid + H(+)</text>
        <dbReference type="Rhea" id="RHEA:59388"/>
        <dbReference type="ChEBI" id="CHEBI:2571"/>
        <dbReference type="ChEBI" id="CHEBI:15377"/>
        <dbReference type="ChEBI" id="CHEBI:15378"/>
        <dbReference type="ChEBI" id="CHEBI:28868"/>
        <dbReference type="ChEBI" id="CHEBI:35748"/>
    </reaction>
</comment>
<comment type="catalytic activity">
    <reaction evidence="2 3">
        <text>a butanoate ester + H2O = an aliphatic alcohol + butanoate + H(+)</text>
        <dbReference type="Rhea" id="RHEA:47348"/>
        <dbReference type="ChEBI" id="CHEBI:2571"/>
        <dbReference type="ChEBI" id="CHEBI:15377"/>
        <dbReference type="ChEBI" id="CHEBI:15378"/>
        <dbReference type="ChEBI" id="CHEBI:17968"/>
        <dbReference type="ChEBI" id="CHEBI:50477"/>
    </reaction>
</comment>
<comment type="catalytic activity">
    <reaction evidence="2 3">
        <text>an acetyl ester + H2O = an aliphatic alcohol + acetate + H(+)</text>
        <dbReference type="Rhea" id="RHEA:12957"/>
        <dbReference type="ChEBI" id="CHEBI:2571"/>
        <dbReference type="ChEBI" id="CHEBI:15377"/>
        <dbReference type="ChEBI" id="CHEBI:15378"/>
        <dbReference type="ChEBI" id="CHEBI:30089"/>
        <dbReference type="ChEBI" id="CHEBI:47622"/>
    </reaction>
</comment>
<comment type="catalytic activity">
    <reaction evidence="2 3">
        <text>decanoate ester + H2O = decanoate + an aliphatic alcohol + H(+)</text>
        <dbReference type="Rhea" id="RHEA:47360"/>
        <dbReference type="ChEBI" id="CHEBI:2571"/>
        <dbReference type="ChEBI" id="CHEBI:15377"/>
        <dbReference type="ChEBI" id="CHEBI:15378"/>
        <dbReference type="ChEBI" id="CHEBI:27689"/>
        <dbReference type="ChEBI" id="CHEBI:87658"/>
    </reaction>
</comment>
<comment type="catalytic activity">
    <reaction evidence="2 3">
        <text>an octanoate ester + H2O = an aliphatic alcohol + octanoate + H(+)</text>
        <dbReference type="Rhea" id="RHEA:47356"/>
        <dbReference type="ChEBI" id="CHEBI:2571"/>
        <dbReference type="ChEBI" id="CHEBI:15377"/>
        <dbReference type="ChEBI" id="CHEBI:15378"/>
        <dbReference type="ChEBI" id="CHEBI:25646"/>
        <dbReference type="ChEBI" id="CHEBI:87657"/>
    </reaction>
</comment>
<comment type="catalytic activity">
    <reaction evidence="2 3">
        <text>a dodecanoate ester + H2O = an aliphatic alcohol + dodecanoate + H(+)</text>
        <dbReference type="Rhea" id="RHEA:47364"/>
        <dbReference type="ChEBI" id="CHEBI:2571"/>
        <dbReference type="ChEBI" id="CHEBI:15377"/>
        <dbReference type="ChEBI" id="CHEBI:15378"/>
        <dbReference type="ChEBI" id="CHEBI:18262"/>
        <dbReference type="ChEBI" id="CHEBI:87659"/>
    </reaction>
</comment>
<comment type="catalytic activity">
    <reaction evidence="1">
        <text>hexadecanoate ester + H2O = an aliphatic alcohol + hexadecanoate + H(+)</text>
        <dbReference type="Rhea" id="RHEA:47392"/>
        <dbReference type="ChEBI" id="CHEBI:2571"/>
        <dbReference type="ChEBI" id="CHEBI:7896"/>
        <dbReference type="ChEBI" id="CHEBI:15377"/>
        <dbReference type="ChEBI" id="CHEBI:15378"/>
        <dbReference type="ChEBI" id="CHEBI:25835"/>
    </reaction>
</comment>
<comment type="activity regulation">
    <text evidence="2 4">Inhibited by the ionic detergent SDS and by the serine protease inhibitor PMSF (PubMed:28164792). Inhibited by the FDA approved drugs Diosmin, Acarbose and Ouabain. These drugs remain bound in the active site pocket and could be probable drug candidates to combat TB disease (PubMed:29557724).</text>
</comment>
<comment type="biophysicochemical properties">
    <kinetics>
        <KM evidence="2">1.73 uM for pNP-butyrate</KM>
        <KM evidence="3">333 uM for pNP-butyrate</KM>
        <text evidence="2">kcat is 49.8 min(-1) with pNP-butyrate as substrate.</text>
    </kinetics>
    <phDependence>
        <text evidence="2 3">Optimum pH is 8.0 (with pNP-butyrate as substrate).</text>
    </phDependence>
    <temperatureDependence>
        <text evidence="2 3">Optimum temperature is 40 degrees Celsius (with pNP-butyrate as substrate).</text>
    </temperatureDependence>
</comment>
<comment type="subcellular location">
    <subcellularLocation>
        <location evidence="3">Secreted</location>
    </subcellularLocation>
    <text evidence="3">Extracellular.</text>
</comment>
<comment type="induction">
    <text evidence="2">Up-regulated in nutritive stress but not in acidic and oxidative stress.</text>
</comment>
<comment type="miscellaneous">
    <text evidence="4">Was identified as a drug target.</text>
</comment>
<comment type="similarity">
    <text evidence="5">Belongs to the 'GDXG' lipolytic enzyme family.</text>
</comment>
<sequence>MAVRPVLAVGSYLPHAPWPWGVIDQAARVLLPASTTVRAAVSLPNASAQLVRASGVLPADGTRRAVLYLHGGAFLTCGANSHGRLVELLSKFADSPVLVVDYRLIPKHSIGMALDDCHDGYRWLRLLGYEPEQIVLAGDSAGGYLALALAQRLQEVGEEPAALVAISPLLQLAKEHKQAHPNIKTDAMFPARAFDALDALVASAAARNQVDGEPEELYEPLEHITPGLPRTLIHVSGSEVLLHDAQLAAAKLAAAGVPAEVRVWPGQVHDFQVAASMLPEAIRSLRQIGEYIREATG</sequence>
<reference key="1">
    <citation type="journal article" date="1998" name="Nature">
        <title>Deciphering the biology of Mycobacterium tuberculosis from the complete genome sequence.</title>
        <authorList>
            <person name="Cole S.T."/>
            <person name="Brosch R."/>
            <person name="Parkhill J."/>
            <person name="Garnier T."/>
            <person name="Churcher C.M."/>
            <person name="Harris D.E."/>
            <person name="Gordon S.V."/>
            <person name="Eiglmeier K."/>
            <person name="Gas S."/>
            <person name="Barry C.E. III"/>
            <person name="Tekaia F."/>
            <person name="Badcock K."/>
            <person name="Basham D."/>
            <person name="Brown D."/>
            <person name="Chillingworth T."/>
            <person name="Connor R."/>
            <person name="Davies R.M."/>
            <person name="Devlin K."/>
            <person name="Feltwell T."/>
            <person name="Gentles S."/>
            <person name="Hamlin N."/>
            <person name="Holroyd S."/>
            <person name="Hornsby T."/>
            <person name="Jagels K."/>
            <person name="Krogh A."/>
            <person name="McLean J."/>
            <person name="Moule S."/>
            <person name="Murphy L.D."/>
            <person name="Oliver S."/>
            <person name="Osborne J."/>
            <person name="Quail M.A."/>
            <person name="Rajandream M.A."/>
            <person name="Rogers J."/>
            <person name="Rutter S."/>
            <person name="Seeger K."/>
            <person name="Skelton S."/>
            <person name="Squares S."/>
            <person name="Squares R."/>
            <person name="Sulston J.E."/>
            <person name="Taylor K."/>
            <person name="Whitehead S."/>
            <person name="Barrell B.G."/>
        </authorList>
    </citation>
    <scope>NUCLEOTIDE SEQUENCE [LARGE SCALE GENOMIC DNA]</scope>
    <source>
        <strain>ATCC 25618 / H37Rv</strain>
    </source>
</reference>
<reference key="2">
    <citation type="journal article" date="2015" name="PLoS ONE">
        <title>Identification and characterization of lipase activity and immunogenicity of LipL from Mycobacterium tuberculosis.</title>
        <authorList>
            <person name="Cao J."/>
            <person name="Dang G."/>
            <person name="Li H."/>
            <person name="Li T."/>
            <person name="Yue Z."/>
            <person name="Li N."/>
            <person name="Liu Y."/>
            <person name="Liu S."/>
            <person name="Chen L."/>
        </authorList>
    </citation>
    <scope>FUNCTION</scope>
    <scope>CATALYTIC ACTIVITY</scope>
</reference>
<reference key="3">
    <citation type="journal article" date="2017" name="Microbiol. Res.">
        <title>Characterization and function of Mycobacterium tuberculosis H37Rv Lipase Rv1076 (LipU).</title>
        <authorList>
            <person name="Li C."/>
            <person name="Li Q."/>
            <person name="Zhang Y."/>
            <person name="Gong Z."/>
            <person name="Ren S."/>
            <person name="Li P."/>
            <person name="Xie J."/>
        </authorList>
    </citation>
    <scope>FUNCTION</scope>
    <scope>CATALYTIC ACTIVITY</scope>
    <scope>ACTIVITY REGULATION</scope>
    <scope>BIOPHYSICOCHEMICAL PROPERTIES</scope>
    <scope>MUTAGENESIS OF SER-140; ASP-244 AND HIS-269</scope>
    <scope>ACTIVE SITE</scope>
</reference>
<reference key="4">
    <citation type="journal article" date="2017" name="Int. J. Biol. Macromol.">
        <title>Characterization of an extracellular protein, Rv1076 from M. tuberculosis with a potential role in humoral response.</title>
        <authorList>
            <person name="Kaur G."/>
            <person name="Saini V."/>
            <person name="Kumari B."/>
            <person name="Kaur J."/>
            <person name="Kaur J."/>
        </authorList>
    </citation>
    <scope>FUNCTION</scope>
    <scope>CATALYTIC ACTIVITY</scope>
    <scope>BIOPHYSICOCHEMICAL PROPERTIES</scope>
    <scope>SUBCELLULAR LOCATION</scope>
    <scope>MUTAGENESIS OF SER-140; GLU-239 AND HIS-269</scope>
    <scope>ACTIVE SITE</scope>
</reference>
<reference key="5">
    <citation type="journal article" date="2019" name="J. Biomol. Struct. Dyn.">
        <title>Drug targeted virtual screening and molecular dynamics of LipU protein of Mycobacterium tuberculosis and Mycobacterium leprae.</title>
        <authorList>
            <person name="Kaur G."/>
            <person name="Pandey B."/>
            <person name="Kumar A."/>
            <person name="Garewal N."/>
            <person name="Grover A."/>
            <person name="Kaur J."/>
        </authorList>
    </citation>
    <scope>ACTIVITY REGULATION</scope>
    <scope>IDENTIFICATION AS A DRUG TARGET</scope>
</reference>
<feature type="chain" id="PRO_0000448882" description="Esterase LipU">
    <location>
        <begin position="1"/>
        <end position="297"/>
    </location>
</feature>
<feature type="active site" evidence="6 7">
    <location>
        <position position="140"/>
    </location>
</feature>
<feature type="active site" evidence="7">
    <location>
        <position position="239"/>
    </location>
</feature>
<feature type="active site" evidence="6 7">
    <location>
        <position position="269"/>
    </location>
</feature>
<feature type="mutagenesis site" description="Complete loss of activity." evidence="2 3">
    <original>S</original>
    <variation>A</variation>
    <location>
        <position position="140"/>
    </location>
</feature>
<feature type="mutagenesis site" description="85% loss of activity." evidence="3">
    <original>E</original>
    <variation>A</variation>
    <location>
        <position position="239"/>
    </location>
</feature>
<feature type="mutagenesis site" description="20% loss of activity." evidence="2">
    <original>D</original>
    <variation>A</variation>
    <location>
        <position position="244"/>
    </location>
</feature>
<feature type="mutagenesis site" description="Complete loss of activity." evidence="2 3">
    <original>H</original>
    <variation>A</variation>
    <location>
        <position position="269"/>
    </location>
</feature>
<evidence type="ECO:0000269" key="1">
    <source>
    </source>
</evidence>
<evidence type="ECO:0000269" key="2">
    <source>
    </source>
</evidence>
<evidence type="ECO:0000269" key="3">
    <source>
    </source>
</evidence>
<evidence type="ECO:0000269" key="4">
    <source>
    </source>
</evidence>
<evidence type="ECO:0000305" key="5"/>
<evidence type="ECO:0000305" key="6">
    <source>
    </source>
</evidence>
<evidence type="ECO:0000305" key="7">
    <source>
    </source>
</evidence>
<evidence type="ECO:0000312" key="8">
    <source>
        <dbReference type="EMBL" id="CCP43827.1"/>
    </source>
</evidence>
<name>LIPU_MYCTU</name>
<proteinExistence type="evidence at protein level"/>
<gene>
    <name evidence="8" type="primary">lipU</name>
    <name evidence="8" type="ordered locus">Rv1076</name>
</gene>
<accession>O53424</accession>
<accession>I6Y5J0</accession>
<accession>L0T8J3</accession>